<accession>Q9SWB6</accession>
<name>TENAE_SOYBN</name>
<dbReference type="EC" id="3.5.1.-" evidence="1"/>
<dbReference type="EC" id="3.5.99.2" evidence="1"/>
<dbReference type="EMBL" id="AF169021">
    <property type="protein sequence ID" value="AAD51624.1"/>
    <property type="molecule type" value="mRNA"/>
</dbReference>
<dbReference type="RefSeq" id="NP_001238329.1">
    <property type="nucleotide sequence ID" value="NM_001251400.1"/>
</dbReference>
<dbReference type="SMR" id="Q9SWB6"/>
<dbReference type="FunCoup" id="Q9SWB6">
    <property type="interactions" value="413"/>
</dbReference>
<dbReference type="STRING" id="3847.Q9SWB6"/>
<dbReference type="PaxDb" id="3847-GLYMA17G03600.1"/>
<dbReference type="EnsemblPlants" id="KRH02337">
    <property type="protein sequence ID" value="KRH02337"/>
    <property type="gene ID" value="GLYMA_17G032700"/>
</dbReference>
<dbReference type="GeneID" id="547557"/>
<dbReference type="Gramene" id="KRH02337">
    <property type="protein sequence ID" value="KRH02337"/>
    <property type="gene ID" value="GLYMA_17G032700"/>
</dbReference>
<dbReference type="KEGG" id="gmx:547557"/>
<dbReference type="eggNOG" id="ENOG502QQ9D">
    <property type="taxonomic scope" value="Eukaryota"/>
</dbReference>
<dbReference type="HOGENOM" id="CLU_055855_1_0_1"/>
<dbReference type="InParanoid" id="Q9SWB6"/>
<dbReference type="OMA" id="FNTWLVQ"/>
<dbReference type="OrthoDB" id="37730at2759"/>
<dbReference type="UniPathway" id="UPA00060"/>
<dbReference type="Proteomes" id="UP000008827">
    <property type="component" value="Chromosome 17"/>
</dbReference>
<dbReference type="GO" id="GO:0005829">
    <property type="term" value="C:cytosol"/>
    <property type="evidence" value="ECO:0000318"/>
    <property type="project" value="GO_Central"/>
</dbReference>
<dbReference type="GO" id="GO:0050334">
    <property type="term" value="F:thiaminase activity"/>
    <property type="evidence" value="ECO:0007669"/>
    <property type="project" value="UniProtKB-EC"/>
</dbReference>
<dbReference type="GO" id="GO:0009228">
    <property type="term" value="P:thiamine biosynthetic process"/>
    <property type="evidence" value="ECO:0007669"/>
    <property type="project" value="UniProtKB-KW"/>
</dbReference>
<dbReference type="GO" id="GO:0009229">
    <property type="term" value="P:thiamine diphosphate biosynthetic process"/>
    <property type="evidence" value="ECO:0007669"/>
    <property type="project" value="UniProtKB-UniPathway"/>
</dbReference>
<dbReference type="CDD" id="cd19357">
    <property type="entry name" value="TenA_E_At3g16990-like"/>
    <property type="match status" value="1"/>
</dbReference>
<dbReference type="FunFam" id="1.20.910.10:FF:000007">
    <property type="entry name" value="Bifunctional TENA-E protein"/>
    <property type="match status" value="1"/>
</dbReference>
<dbReference type="Gene3D" id="1.20.910.10">
    <property type="entry name" value="Heme oxygenase-like"/>
    <property type="match status" value="1"/>
</dbReference>
<dbReference type="InterPro" id="IPR016084">
    <property type="entry name" value="Haem_Oase-like_multi-hlx"/>
</dbReference>
<dbReference type="InterPro" id="IPR004305">
    <property type="entry name" value="Thiaminase-2/PQQC"/>
</dbReference>
<dbReference type="InterPro" id="IPR050967">
    <property type="entry name" value="Thiamine_Salvage_TenA"/>
</dbReference>
<dbReference type="PANTHER" id="PTHR43198:SF5">
    <property type="entry name" value="BIFUNCTIONAL TENA-E PROTEIN"/>
    <property type="match status" value="1"/>
</dbReference>
<dbReference type="PANTHER" id="PTHR43198">
    <property type="entry name" value="BIFUNCTIONAL TH2 PROTEIN"/>
    <property type="match status" value="1"/>
</dbReference>
<dbReference type="Pfam" id="PF03070">
    <property type="entry name" value="TENA_THI-4"/>
    <property type="match status" value="1"/>
</dbReference>
<dbReference type="SUPFAM" id="SSF48613">
    <property type="entry name" value="Heme oxygenase-like"/>
    <property type="match status" value="1"/>
</dbReference>
<sequence>MEEKAKAEQKKIGMTETWLKKHRLLYNGATRHPLIISIRDGTINTASFKTWLAQDYLFVRAFVPFVASVLIKAWKESDCSGDMEVILGGMASLEDEISWFKTEANKWGISLSDVVPQQANKNYCGLLESLMSPDAEYTVAITAFWAIETVYQESFAHCIEEGSKTPPELKETCVRWGNEAFGKYCQSLQNIANRCLQKASDEELKKAEVMLLSVLEHEVEFWNMSRGNV</sequence>
<organism>
    <name type="scientific">Glycine max</name>
    <name type="common">Soybean</name>
    <name type="synonym">Glycine hispida</name>
    <dbReference type="NCBI Taxonomy" id="3847"/>
    <lineage>
        <taxon>Eukaryota</taxon>
        <taxon>Viridiplantae</taxon>
        <taxon>Streptophyta</taxon>
        <taxon>Embryophyta</taxon>
        <taxon>Tracheophyta</taxon>
        <taxon>Spermatophyta</taxon>
        <taxon>Magnoliopsida</taxon>
        <taxon>eudicotyledons</taxon>
        <taxon>Gunneridae</taxon>
        <taxon>Pentapetalae</taxon>
        <taxon>rosids</taxon>
        <taxon>fabids</taxon>
        <taxon>Fabales</taxon>
        <taxon>Fabaceae</taxon>
        <taxon>Papilionoideae</taxon>
        <taxon>50 kb inversion clade</taxon>
        <taxon>NPAAA clade</taxon>
        <taxon>indigoferoid/millettioid clade</taxon>
        <taxon>Phaseoleae</taxon>
        <taxon>Glycine</taxon>
        <taxon>Glycine subgen. Soja</taxon>
    </lineage>
</organism>
<evidence type="ECO:0000250" key="1">
    <source>
        <dbReference type="UniProtKB" id="Q9ASY9"/>
    </source>
</evidence>
<evidence type="ECO:0000303" key="2">
    <source ref="1"/>
</evidence>
<evidence type="ECO:0000305" key="3"/>
<keyword id="KW-1015">Disulfide bond</keyword>
<keyword id="KW-0378">Hydrolase</keyword>
<keyword id="KW-1185">Reference proteome</keyword>
<keyword id="KW-0784">Thiamine biosynthesis</keyword>
<proteinExistence type="evidence at transcript level"/>
<gene>
    <name evidence="1" type="primary">TENA_E</name>
    <name evidence="2" type="synonym">PM36</name>
    <name type="ordered locus">Glyma17g03600</name>
</gene>
<reference key="1">
    <citation type="submission" date="1999-07" db="EMBL/GenBank/DDBJ databases">
        <title>Characterization of a soybean seed maturation protein, PM36.</title>
        <authorList>
            <person name="Chow T.Y."/>
            <person name="Lin T.Y."/>
            <person name="Lin T.Y."/>
            <person name="Liu S.M."/>
            <person name="Hsing Y.I.C."/>
        </authorList>
    </citation>
    <scope>NUCLEOTIDE SEQUENCE [MRNA]</scope>
</reference>
<reference key="2">
    <citation type="journal article" date="2010" name="Nature">
        <title>Genome sequence of the palaeopolyploid soybean.</title>
        <authorList>
            <person name="Schmutz J."/>
            <person name="Cannon S.B."/>
            <person name="Schlueter J."/>
            <person name="Ma J."/>
            <person name="Mitros T."/>
            <person name="Nelson W."/>
            <person name="Hyten D.L."/>
            <person name="Song Q."/>
            <person name="Thelen J.J."/>
            <person name="Cheng J."/>
            <person name="Xu D."/>
            <person name="Hellsten U."/>
            <person name="May G.D."/>
            <person name="Yu Y."/>
            <person name="Sakurai T."/>
            <person name="Umezawa T."/>
            <person name="Bhattacharyya M.K."/>
            <person name="Sandhu D."/>
            <person name="Valliyodan B."/>
            <person name="Lindquist E."/>
            <person name="Peto M."/>
            <person name="Grant D."/>
            <person name="Shu S."/>
            <person name="Goodstein D."/>
            <person name="Barry K."/>
            <person name="Futrell-Griggs M."/>
            <person name="Abernathy B."/>
            <person name="Du J."/>
            <person name="Tian Z."/>
            <person name="Zhu L."/>
            <person name="Gill N."/>
            <person name="Joshi T."/>
            <person name="Libault M."/>
            <person name="Sethuraman A."/>
            <person name="Zhang X.-C."/>
            <person name="Shinozaki K."/>
            <person name="Nguyen H.T."/>
            <person name="Wing R.A."/>
            <person name="Cregan P."/>
            <person name="Specht J."/>
            <person name="Grimwood J."/>
            <person name="Rokhsar D."/>
            <person name="Stacey G."/>
            <person name="Shoemaker R.C."/>
            <person name="Jackson S.A."/>
        </authorList>
    </citation>
    <scope>NUCLEOTIDE SEQUENCE [LARGE SCALE GENOMIC DNA]</scope>
    <source>
        <strain>cv. Williams 82</strain>
    </source>
</reference>
<protein>
    <recommendedName>
        <fullName evidence="1">Probable bifunctional TENA-E protein</fullName>
        <ecNumber evidence="1">3.5.1.-</ecNumber>
        <ecNumber evidence="1">3.5.99.2</ecNumber>
    </recommendedName>
    <alternativeName>
        <fullName evidence="1">Aminopyrimidine aminohydrolase</fullName>
    </alternativeName>
    <alternativeName>
        <fullName evidence="1">Formylaminopyrimidine amidohydrolase</fullName>
    </alternativeName>
    <alternativeName>
        <fullName evidence="1">Formylaminopyrimidine deformylase</fullName>
    </alternativeName>
    <alternativeName>
        <fullName evidence="2">Seed maturation protein PM36</fullName>
    </alternativeName>
</protein>
<feature type="chain" id="PRO_0000192045" description="Probable bifunctional TENA-E protein">
    <location>
        <begin position="1"/>
        <end position="229"/>
    </location>
</feature>
<feature type="disulfide bond" evidence="1">
    <location>
        <begin position="158"/>
        <end position="173"/>
    </location>
</feature>
<comment type="function">
    <text evidence="1">May be involved in thiamine salvage.</text>
</comment>
<comment type="catalytic activity">
    <reaction evidence="3">
        <text>4-amino-5-aminomethyl-2-methylpyrimidine + H2O = 4-amino-5-hydroxymethyl-2-methylpyrimidine + NH4(+)</text>
        <dbReference type="Rhea" id="RHEA:31799"/>
        <dbReference type="ChEBI" id="CHEBI:15377"/>
        <dbReference type="ChEBI" id="CHEBI:16892"/>
        <dbReference type="ChEBI" id="CHEBI:28938"/>
        <dbReference type="ChEBI" id="CHEBI:63416"/>
        <dbReference type="EC" id="3.5.99.2"/>
    </reaction>
</comment>
<comment type="catalytic activity">
    <reaction evidence="3">
        <text>N-formyl-4-amino-5-aminomethyl-2-methylpyrimidine + H2O = 4-amino-5-aminomethyl-2-methylpyrimidine + formate</text>
        <dbReference type="Rhea" id="RHEA:46212"/>
        <dbReference type="ChEBI" id="CHEBI:15377"/>
        <dbReference type="ChEBI" id="CHEBI:15740"/>
        <dbReference type="ChEBI" id="CHEBI:63416"/>
        <dbReference type="ChEBI" id="CHEBI:85895"/>
    </reaction>
</comment>
<comment type="pathway">
    <text evidence="3">Cofactor biosynthesis; thiamine diphosphate biosynthesis.</text>
</comment>
<comment type="similarity">
    <text evidence="3">Belongs to the thiaminase-2 family.</text>
</comment>